<accession>B7MSY3</accession>
<feature type="chain" id="PRO_1000192177" description="DNA mismatch repair protein MutL">
    <location>
        <begin position="1"/>
        <end position="615"/>
    </location>
</feature>
<feature type="region of interest" description="Disordered" evidence="2">
    <location>
        <begin position="362"/>
        <end position="397"/>
    </location>
</feature>
<feature type="compositionally biased region" description="Low complexity" evidence="2">
    <location>
        <begin position="373"/>
        <end position="387"/>
    </location>
</feature>
<keyword id="KW-0227">DNA damage</keyword>
<keyword id="KW-0234">DNA repair</keyword>
<sequence>MPIQVLPPQLANQIAAGEVVERPASVVKELVENSLDAGATRIDIDIERGGAKLIRIRDNGCGIKKDELALALARHATSKIASLDDLEAIISLGFRGEALASISSVSRLTLTSRTAEQQEAWQAYAEGRDMDVTVKPAAHPVGTTLEVLDLFYNTPARRKFLRTEKTEFNHIDEIIRRIALARFDVTINLSHNGKIVRQYRAVPEGGQKERRLGAICGTAFLEQALAIEWQHGDLTLRGWVADPNHTTPALAEIQYCYVNGRMMRDRLINHAIRQACEDKLGADQQPAFVLYLEIDPHQVDVNVHPAKHEVRFHQSRLVHDFIYQGVLSVLQQQLETPLPLDDEPQPAPRAIPENRVAAGRNHFAEPAVREPVAPRYSPAPASGSRPAAPWPNAQPGYQKQQGEVYRQLLQTPAPMQKPKAPEPQEPALAANSQSFGRVLTIVHSDCALLERDGNISLLSLPVAERWLRQAQLTPGEVPVCAQPLLIPLRLKVSGEEKSALEKAQSALAELGIDFQSDAQHVTIRAVPLPLRQQNLQILIPELIGYLAKQSVFEPGNIAQWIARNLMSEHAQWSMAQAITLLADVERLCPQLVKTPPGGLLQSVDLHPAIKALKDE</sequence>
<proteinExistence type="inferred from homology"/>
<protein>
    <recommendedName>
        <fullName evidence="1">DNA mismatch repair protein MutL</fullName>
    </recommendedName>
</protein>
<evidence type="ECO:0000255" key="1">
    <source>
        <dbReference type="HAMAP-Rule" id="MF_00149"/>
    </source>
</evidence>
<evidence type="ECO:0000256" key="2">
    <source>
        <dbReference type="SAM" id="MobiDB-lite"/>
    </source>
</evidence>
<organism>
    <name type="scientific">Escherichia coli O81 (strain ED1a)</name>
    <dbReference type="NCBI Taxonomy" id="585397"/>
    <lineage>
        <taxon>Bacteria</taxon>
        <taxon>Pseudomonadati</taxon>
        <taxon>Pseudomonadota</taxon>
        <taxon>Gammaproteobacteria</taxon>
        <taxon>Enterobacterales</taxon>
        <taxon>Enterobacteriaceae</taxon>
        <taxon>Escherichia</taxon>
    </lineage>
</organism>
<dbReference type="EMBL" id="CU928162">
    <property type="protein sequence ID" value="CAR11058.2"/>
    <property type="molecule type" value="Genomic_DNA"/>
</dbReference>
<dbReference type="RefSeq" id="WP_001350387.1">
    <property type="nucleotide sequence ID" value="NC_011745.1"/>
</dbReference>
<dbReference type="SMR" id="B7MSY3"/>
<dbReference type="KEGG" id="ecq:ECED1_4955"/>
<dbReference type="HOGENOM" id="CLU_004131_5_1_6"/>
<dbReference type="Proteomes" id="UP000000748">
    <property type="component" value="Chromosome"/>
</dbReference>
<dbReference type="GO" id="GO:0032300">
    <property type="term" value="C:mismatch repair complex"/>
    <property type="evidence" value="ECO:0007669"/>
    <property type="project" value="InterPro"/>
</dbReference>
<dbReference type="GO" id="GO:0005524">
    <property type="term" value="F:ATP binding"/>
    <property type="evidence" value="ECO:0007669"/>
    <property type="project" value="InterPro"/>
</dbReference>
<dbReference type="GO" id="GO:0016887">
    <property type="term" value="F:ATP hydrolysis activity"/>
    <property type="evidence" value="ECO:0007669"/>
    <property type="project" value="InterPro"/>
</dbReference>
<dbReference type="GO" id="GO:0140664">
    <property type="term" value="F:ATP-dependent DNA damage sensor activity"/>
    <property type="evidence" value="ECO:0007669"/>
    <property type="project" value="InterPro"/>
</dbReference>
<dbReference type="GO" id="GO:0030983">
    <property type="term" value="F:mismatched DNA binding"/>
    <property type="evidence" value="ECO:0007669"/>
    <property type="project" value="InterPro"/>
</dbReference>
<dbReference type="GO" id="GO:0006298">
    <property type="term" value="P:mismatch repair"/>
    <property type="evidence" value="ECO:0007669"/>
    <property type="project" value="UniProtKB-UniRule"/>
</dbReference>
<dbReference type="CDD" id="cd16926">
    <property type="entry name" value="HATPase_MutL-MLH-PMS-like"/>
    <property type="match status" value="1"/>
</dbReference>
<dbReference type="CDD" id="cd03482">
    <property type="entry name" value="MutL_Trans_MutL"/>
    <property type="match status" value="1"/>
</dbReference>
<dbReference type="FunFam" id="3.30.230.10:FF:000013">
    <property type="entry name" value="DNA mismatch repair endonuclease MutL"/>
    <property type="match status" value="1"/>
</dbReference>
<dbReference type="FunFam" id="3.30.565.10:FF:000003">
    <property type="entry name" value="DNA mismatch repair endonuclease MutL"/>
    <property type="match status" value="1"/>
</dbReference>
<dbReference type="FunFam" id="3.30.1370.100:FF:000002">
    <property type="entry name" value="DNA mismatch repair protein MutL"/>
    <property type="match status" value="1"/>
</dbReference>
<dbReference type="Gene3D" id="3.30.230.10">
    <property type="match status" value="1"/>
</dbReference>
<dbReference type="Gene3D" id="3.30.565.10">
    <property type="entry name" value="Histidine kinase-like ATPase, C-terminal domain"/>
    <property type="match status" value="1"/>
</dbReference>
<dbReference type="Gene3D" id="3.30.1540.20">
    <property type="entry name" value="MutL, C-terminal domain, dimerisation subdomain"/>
    <property type="match status" value="1"/>
</dbReference>
<dbReference type="Gene3D" id="3.30.1370.100">
    <property type="entry name" value="MutL, C-terminal domain, regulatory subdomain"/>
    <property type="match status" value="1"/>
</dbReference>
<dbReference type="HAMAP" id="MF_00149">
    <property type="entry name" value="DNA_mis_repair"/>
    <property type="match status" value="1"/>
</dbReference>
<dbReference type="InterPro" id="IPR014762">
    <property type="entry name" value="DNA_mismatch_repair_CS"/>
</dbReference>
<dbReference type="InterPro" id="IPR020667">
    <property type="entry name" value="DNA_mismatch_repair_MutL"/>
</dbReference>
<dbReference type="InterPro" id="IPR013507">
    <property type="entry name" value="DNA_mismatch_S5_2-like"/>
</dbReference>
<dbReference type="InterPro" id="IPR036890">
    <property type="entry name" value="HATPase_C_sf"/>
</dbReference>
<dbReference type="InterPro" id="IPR002099">
    <property type="entry name" value="MutL/Mlh/PMS"/>
</dbReference>
<dbReference type="InterPro" id="IPR038973">
    <property type="entry name" value="MutL/Mlh/Pms-like"/>
</dbReference>
<dbReference type="InterPro" id="IPR014790">
    <property type="entry name" value="MutL_C"/>
</dbReference>
<dbReference type="InterPro" id="IPR042120">
    <property type="entry name" value="MutL_C_dimsub"/>
</dbReference>
<dbReference type="InterPro" id="IPR042121">
    <property type="entry name" value="MutL_C_regsub"/>
</dbReference>
<dbReference type="InterPro" id="IPR037198">
    <property type="entry name" value="MutL_C_sf"/>
</dbReference>
<dbReference type="InterPro" id="IPR020568">
    <property type="entry name" value="Ribosomal_Su5_D2-typ_SF"/>
</dbReference>
<dbReference type="InterPro" id="IPR014721">
    <property type="entry name" value="Ribsml_uS5_D2-typ_fold_subgr"/>
</dbReference>
<dbReference type="NCBIfam" id="TIGR00585">
    <property type="entry name" value="mutl"/>
    <property type="match status" value="1"/>
</dbReference>
<dbReference type="NCBIfam" id="NF000948">
    <property type="entry name" value="PRK00095.1-1"/>
    <property type="match status" value="1"/>
</dbReference>
<dbReference type="PANTHER" id="PTHR10073">
    <property type="entry name" value="DNA MISMATCH REPAIR PROTEIN MLH, PMS, MUTL"/>
    <property type="match status" value="1"/>
</dbReference>
<dbReference type="PANTHER" id="PTHR10073:SF12">
    <property type="entry name" value="DNA MISMATCH REPAIR PROTEIN MLH1"/>
    <property type="match status" value="1"/>
</dbReference>
<dbReference type="Pfam" id="PF01119">
    <property type="entry name" value="DNA_mis_repair"/>
    <property type="match status" value="1"/>
</dbReference>
<dbReference type="Pfam" id="PF13589">
    <property type="entry name" value="HATPase_c_3"/>
    <property type="match status" value="1"/>
</dbReference>
<dbReference type="Pfam" id="PF08676">
    <property type="entry name" value="MutL_C"/>
    <property type="match status" value="1"/>
</dbReference>
<dbReference type="SMART" id="SM01340">
    <property type="entry name" value="DNA_mis_repair"/>
    <property type="match status" value="1"/>
</dbReference>
<dbReference type="SMART" id="SM00853">
    <property type="entry name" value="MutL_C"/>
    <property type="match status" value="1"/>
</dbReference>
<dbReference type="SUPFAM" id="SSF55874">
    <property type="entry name" value="ATPase domain of HSP90 chaperone/DNA topoisomerase II/histidine kinase"/>
    <property type="match status" value="1"/>
</dbReference>
<dbReference type="SUPFAM" id="SSF118116">
    <property type="entry name" value="DNA mismatch repair protein MutL"/>
    <property type="match status" value="1"/>
</dbReference>
<dbReference type="SUPFAM" id="SSF54211">
    <property type="entry name" value="Ribosomal protein S5 domain 2-like"/>
    <property type="match status" value="1"/>
</dbReference>
<dbReference type="PROSITE" id="PS00058">
    <property type="entry name" value="DNA_MISMATCH_REPAIR_1"/>
    <property type="match status" value="1"/>
</dbReference>
<reference key="1">
    <citation type="journal article" date="2009" name="PLoS Genet.">
        <title>Organised genome dynamics in the Escherichia coli species results in highly diverse adaptive paths.</title>
        <authorList>
            <person name="Touchon M."/>
            <person name="Hoede C."/>
            <person name="Tenaillon O."/>
            <person name="Barbe V."/>
            <person name="Baeriswyl S."/>
            <person name="Bidet P."/>
            <person name="Bingen E."/>
            <person name="Bonacorsi S."/>
            <person name="Bouchier C."/>
            <person name="Bouvet O."/>
            <person name="Calteau A."/>
            <person name="Chiapello H."/>
            <person name="Clermont O."/>
            <person name="Cruveiller S."/>
            <person name="Danchin A."/>
            <person name="Diard M."/>
            <person name="Dossat C."/>
            <person name="Karoui M.E."/>
            <person name="Frapy E."/>
            <person name="Garry L."/>
            <person name="Ghigo J.M."/>
            <person name="Gilles A.M."/>
            <person name="Johnson J."/>
            <person name="Le Bouguenec C."/>
            <person name="Lescat M."/>
            <person name="Mangenot S."/>
            <person name="Martinez-Jehanne V."/>
            <person name="Matic I."/>
            <person name="Nassif X."/>
            <person name="Oztas S."/>
            <person name="Petit M.A."/>
            <person name="Pichon C."/>
            <person name="Rouy Z."/>
            <person name="Ruf C.S."/>
            <person name="Schneider D."/>
            <person name="Tourret J."/>
            <person name="Vacherie B."/>
            <person name="Vallenet D."/>
            <person name="Medigue C."/>
            <person name="Rocha E.P.C."/>
            <person name="Denamur E."/>
        </authorList>
    </citation>
    <scope>NUCLEOTIDE SEQUENCE [LARGE SCALE GENOMIC DNA]</scope>
    <source>
        <strain>ED1a</strain>
    </source>
</reference>
<comment type="function">
    <text evidence="1">This protein is involved in the repair of mismatches in DNA. It is required for dam-dependent methyl-directed DNA mismatch repair. May act as a 'molecular matchmaker', a protein that promotes the formation of a stable complex between two or more DNA-binding proteins in an ATP-dependent manner without itself being part of a final effector complex.</text>
</comment>
<comment type="similarity">
    <text evidence="1">Belongs to the DNA mismatch repair MutL/HexB family.</text>
</comment>
<name>MUTL_ECO81</name>
<gene>
    <name evidence="1" type="primary">mutL</name>
    <name type="ordered locus">ECED1_4955</name>
</gene>